<accession>A1KN36</accession>
<sequence>MAAVTPTVPEFVNVVVSDGSQDAGLAMLLLSRPPTNAMTRQVYREVVAAANELGRRDDVAAVILYGGHEIFSAGDDMPELRTLSAQEADTAARIRQQAVDAVAAIPKPTVAAITGYALGAGLTLALAADWRVSGDNVKFGATEILAGLIPSGDGMARLTRAAGPSRAKELVFSGRFFDAEEALALGLIDDMVAPDDVYDAAAAWARRFLDGPPHALAAAKAGISDVYELAPAERIAAERRRYVEVFAAGQGGGSKGDRGGR</sequence>
<dbReference type="EC" id="4.2.1.17"/>
<dbReference type="EMBL" id="AM408590">
    <property type="protein sequence ID" value="CAL73052.1"/>
    <property type="status" value="ALT_INIT"/>
    <property type="molecule type" value="Genomic_DNA"/>
</dbReference>
<dbReference type="SMR" id="A1KN36"/>
<dbReference type="KEGG" id="mbb:BCG_3063c"/>
<dbReference type="HOGENOM" id="CLU_009834_7_6_11"/>
<dbReference type="Proteomes" id="UP000001472">
    <property type="component" value="Chromosome"/>
</dbReference>
<dbReference type="GO" id="GO:0004300">
    <property type="term" value="F:enoyl-CoA hydratase activity"/>
    <property type="evidence" value="ECO:0007669"/>
    <property type="project" value="UniProtKB-EC"/>
</dbReference>
<dbReference type="GO" id="GO:0006635">
    <property type="term" value="P:fatty acid beta-oxidation"/>
    <property type="evidence" value="ECO:0007669"/>
    <property type="project" value="TreeGrafter"/>
</dbReference>
<dbReference type="CDD" id="cd06558">
    <property type="entry name" value="crotonase-like"/>
    <property type="match status" value="1"/>
</dbReference>
<dbReference type="FunFam" id="3.90.226.10:FF:000009">
    <property type="entry name" value="Carnitinyl-CoA dehydratase"/>
    <property type="match status" value="1"/>
</dbReference>
<dbReference type="Gene3D" id="3.90.226.10">
    <property type="entry name" value="2-enoyl-CoA Hydratase, Chain A, domain 1"/>
    <property type="match status" value="1"/>
</dbReference>
<dbReference type="Gene3D" id="1.10.12.10">
    <property type="entry name" value="Lyase 2-enoyl-coa Hydratase, Chain A, domain 2"/>
    <property type="match status" value="1"/>
</dbReference>
<dbReference type="InterPro" id="IPR029045">
    <property type="entry name" value="ClpP/crotonase-like_dom_sf"/>
</dbReference>
<dbReference type="InterPro" id="IPR001753">
    <property type="entry name" value="Enoyl-CoA_hydra/iso"/>
</dbReference>
<dbReference type="InterPro" id="IPR014748">
    <property type="entry name" value="Enoyl-CoA_hydra_C"/>
</dbReference>
<dbReference type="NCBIfam" id="NF004524">
    <property type="entry name" value="PRK05869.1"/>
    <property type="match status" value="1"/>
</dbReference>
<dbReference type="PANTHER" id="PTHR11941:SF169">
    <property type="entry name" value="(7AS)-7A-METHYL-1,5-DIOXO-2,3,5,6,7,7A-HEXAHYDRO-1H-INDENE-CARBOXYL-COA HYDROLASE"/>
    <property type="match status" value="1"/>
</dbReference>
<dbReference type="PANTHER" id="PTHR11941">
    <property type="entry name" value="ENOYL-COA HYDRATASE-RELATED"/>
    <property type="match status" value="1"/>
</dbReference>
<dbReference type="Pfam" id="PF00378">
    <property type="entry name" value="ECH_1"/>
    <property type="match status" value="1"/>
</dbReference>
<dbReference type="SUPFAM" id="SSF52096">
    <property type="entry name" value="ClpP/crotonase"/>
    <property type="match status" value="1"/>
</dbReference>
<evidence type="ECO:0000250" key="1"/>
<evidence type="ECO:0000250" key="2">
    <source>
        <dbReference type="UniProtKB" id="P9WNN3"/>
    </source>
</evidence>
<evidence type="ECO:0000305" key="3"/>
<gene>
    <name type="primary">echA17</name>
    <name type="ordered locus">BCG_3063c</name>
</gene>
<comment type="function">
    <text evidence="1">Could possibly oxidize fatty acids using specific components.</text>
</comment>
<comment type="catalytic activity">
    <reaction>
        <text>a (3S)-3-hydroxyacyl-CoA = a (2E)-enoyl-CoA + H2O</text>
        <dbReference type="Rhea" id="RHEA:16105"/>
        <dbReference type="ChEBI" id="CHEBI:15377"/>
        <dbReference type="ChEBI" id="CHEBI:57318"/>
        <dbReference type="ChEBI" id="CHEBI:58856"/>
        <dbReference type="EC" id="4.2.1.17"/>
    </reaction>
</comment>
<comment type="catalytic activity">
    <reaction>
        <text>a 4-saturated-(3S)-3-hydroxyacyl-CoA = a (3E)-enoyl-CoA + H2O</text>
        <dbReference type="Rhea" id="RHEA:20724"/>
        <dbReference type="ChEBI" id="CHEBI:15377"/>
        <dbReference type="ChEBI" id="CHEBI:58521"/>
        <dbReference type="ChEBI" id="CHEBI:137480"/>
        <dbReference type="EC" id="4.2.1.17"/>
    </reaction>
</comment>
<comment type="similarity">
    <text evidence="3">Belongs to the enoyl-CoA hydratase/isomerase family.</text>
</comment>
<comment type="sequence caution" evidence="2">
    <conflict type="erroneous initiation">
        <sequence resource="EMBL-CDS" id="CAL73052"/>
    </conflict>
    <text>Truncated N-terminus.</text>
</comment>
<protein>
    <recommendedName>
        <fullName>Probable enoyl-CoA hydratase EchA17</fullName>
        <ecNumber>4.2.1.17</ecNumber>
    </recommendedName>
</protein>
<reference key="1">
    <citation type="journal article" date="2007" name="Proc. Natl. Acad. Sci. U.S.A.">
        <title>Genome plasticity of BCG and impact on vaccine efficacy.</title>
        <authorList>
            <person name="Brosch R."/>
            <person name="Gordon S.V."/>
            <person name="Garnier T."/>
            <person name="Eiglmeier K."/>
            <person name="Frigui W."/>
            <person name="Valenti P."/>
            <person name="Dos Santos S."/>
            <person name="Duthoy S."/>
            <person name="Lacroix C."/>
            <person name="Garcia-Pelayo C."/>
            <person name="Inwald J.K."/>
            <person name="Golby P."/>
            <person name="Garcia J.N."/>
            <person name="Hewinson R.G."/>
            <person name="Behr M.A."/>
            <person name="Quail M.A."/>
            <person name="Churcher C."/>
            <person name="Barrell B.G."/>
            <person name="Parkhill J."/>
            <person name="Cole S.T."/>
        </authorList>
    </citation>
    <scope>NUCLEOTIDE SEQUENCE [LARGE SCALE GENOMIC DNA]</scope>
    <source>
        <strain>BCG / Pasteur 1173P2</strain>
    </source>
</reference>
<feature type="chain" id="PRO_0000383563" description="Probable enoyl-CoA hydratase EchA17">
    <location>
        <begin position="1"/>
        <end position="261"/>
    </location>
</feature>
<feature type="site" description="Important for catalytic activity" evidence="1">
    <location>
        <position position="143"/>
    </location>
</feature>
<proteinExistence type="inferred from homology"/>
<organism>
    <name type="scientific">Mycobacterium bovis (strain BCG / Pasteur 1173P2)</name>
    <dbReference type="NCBI Taxonomy" id="410289"/>
    <lineage>
        <taxon>Bacteria</taxon>
        <taxon>Bacillati</taxon>
        <taxon>Actinomycetota</taxon>
        <taxon>Actinomycetes</taxon>
        <taxon>Mycobacteriales</taxon>
        <taxon>Mycobacteriaceae</taxon>
        <taxon>Mycobacterium</taxon>
        <taxon>Mycobacterium tuberculosis complex</taxon>
    </lineage>
</organism>
<name>ECH17_MYCBP</name>
<keyword id="KW-0276">Fatty acid metabolism</keyword>
<keyword id="KW-0443">Lipid metabolism</keyword>
<keyword id="KW-0456">Lyase</keyword>